<proteinExistence type="inferred from homology"/>
<feature type="chain" id="PRO_0000368583" description="ATP synthase subunit b">
    <location>
        <begin position="1"/>
        <end position="156"/>
    </location>
</feature>
<feature type="transmembrane region" description="Helical" evidence="2">
    <location>
        <begin position="7"/>
        <end position="27"/>
    </location>
</feature>
<dbReference type="EMBL" id="CP000555">
    <property type="protein sequence ID" value="ABM93155.1"/>
    <property type="molecule type" value="Genomic_DNA"/>
</dbReference>
<dbReference type="RefSeq" id="WP_011827794.1">
    <property type="nucleotide sequence ID" value="NC_008825.1"/>
</dbReference>
<dbReference type="SMR" id="A2SC66"/>
<dbReference type="STRING" id="420662.Mpe_A0193"/>
<dbReference type="KEGG" id="mpt:Mpe_A0193"/>
<dbReference type="eggNOG" id="COG0711">
    <property type="taxonomic scope" value="Bacteria"/>
</dbReference>
<dbReference type="HOGENOM" id="CLU_079215_4_5_4"/>
<dbReference type="Proteomes" id="UP000000366">
    <property type="component" value="Chromosome"/>
</dbReference>
<dbReference type="GO" id="GO:0005886">
    <property type="term" value="C:plasma membrane"/>
    <property type="evidence" value="ECO:0007669"/>
    <property type="project" value="UniProtKB-SubCell"/>
</dbReference>
<dbReference type="GO" id="GO:0045259">
    <property type="term" value="C:proton-transporting ATP synthase complex"/>
    <property type="evidence" value="ECO:0007669"/>
    <property type="project" value="UniProtKB-KW"/>
</dbReference>
<dbReference type="GO" id="GO:0046933">
    <property type="term" value="F:proton-transporting ATP synthase activity, rotational mechanism"/>
    <property type="evidence" value="ECO:0007669"/>
    <property type="project" value="UniProtKB-UniRule"/>
</dbReference>
<dbReference type="GO" id="GO:0046961">
    <property type="term" value="F:proton-transporting ATPase activity, rotational mechanism"/>
    <property type="evidence" value="ECO:0007669"/>
    <property type="project" value="TreeGrafter"/>
</dbReference>
<dbReference type="CDD" id="cd06503">
    <property type="entry name" value="ATP-synt_Fo_b"/>
    <property type="match status" value="1"/>
</dbReference>
<dbReference type="Gene3D" id="6.10.250.1580">
    <property type="match status" value="1"/>
</dbReference>
<dbReference type="HAMAP" id="MF_01398">
    <property type="entry name" value="ATP_synth_b_bprime"/>
    <property type="match status" value="1"/>
</dbReference>
<dbReference type="InterPro" id="IPR028987">
    <property type="entry name" value="ATP_synth_B-like_membr_sf"/>
</dbReference>
<dbReference type="InterPro" id="IPR002146">
    <property type="entry name" value="ATP_synth_b/b'su_bac/chlpt"/>
</dbReference>
<dbReference type="InterPro" id="IPR005864">
    <property type="entry name" value="ATP_synth_F0_bsu_bac"/>
</dbReference>
<dbReference type="InterPro" id="IPR050059">
    <property type="entry name" value="ATP_synthase_B_chain"/>
</dbReference>
<dbReference type="NCBIfam" id="TIGR01144">
    <property type="entry name" value="ATP_synt_b"/>
    <property type="match status" value="1"/>
</dbReference>
<dbReference type="NCBIfam" id="NF004411">
    <property type="entry name" value="PRK05759.1-2"/>
    <property type="match status" value="1"/>
</dbReference>
<dbReference type="PANTHER" id="PTHR33445:SF1">
    <property type="entry name" value="ATP SYNTHASE SUBUNIT B"/>
    <property type="match status" value="1"/>
</dbReference>
<dbReference type="PANTHER" id="PTHR33445">
    <property type="entry name" value="ATP SYNTHASE SUBUNIT B', CHLOROPLASTIC"/>
    <property type="match status" value="1"/>
</dbReference>
<dbReference type="Pfam" id="PF00430">
    <property type="entry name" value="ATP-synt_B"/>
    <property type="match status" value="1"/>
</dbReference>
<dbReference type="SUPFAM" id="SSF81573">
    <property type="entry name" value="F1F0 ATP synthase subunit B, membrane domain"/>
    <property type="match status" value="1"/>
</dbReference>
<name>ATPF_METPP</name>
<sequence>MSLNATLFAQLVVFFILAWFTMKFVWPPITKALDERASKIADGLAAADRAKTELASANKRVEEQLASVRDENARRLADAEKRALAIVEDAKKRATEEGSKIVAAAKSEAEQQLVQARESLREQVAALAVKGAEQILKREVNAGVHADLLSRLKTEL</sequence>
<keyword id="KW-0066">ATP synthesis</keyword>
<keyword id="KW-0997">Cell inner membrane</keyword>
<keyword id="KW-1003">Cell membrane</keyword>
<keyword id="KW-0138">CF(0)</keyword>
<keyword id="KW-0375">Hydrogen ion transport</keyword>
<keyword id="KW-0406">Ion transport</keyword>
<keyword id="KW-0472">Membrane</keyword>
<keyword id="KW-1185">Reference proteome</keyword>
<keyword id="KW-0812">Transmembrane</keyword>
<keyword id="KW-1133">Transmembrane helix</keyword>
<keyword id="KW-0813">Transport</keyword>
<organism>
    <name type="scientific">Methylibium petroleiphilum (strain ATCC BAA-1232 / LMG 22953 / PM1)</name>
    <dbReference type="NCBI Taxonomy" id="420662"/>
    <lineage>
        <taxon>Bacteria</taxon>
        <taxon>Pseudomonadati</taxon>
        <taxon>Pseudomonadota</taxon>
        <taxon>Betaproteobacteria</taxon>
        <taxon>Burkholderiales</taxon>
        <taxon>Sphaerotilaceae</taxon>
        <taxon>Methylibium</taxon>
    </lineage>
</organism>
<protein>
    <recommendedName>
        <fullName evidence="2">ATP synthase subunit b</fullName>
    </recommendedName>
    <alternativeName>
        <fullName evidence="2">ATP synthase F(0) sector subunit b</fullName>
    </alternativeName>
    <alternativeName>
        <fullName evidence="2">ATPase subunit I</fullName>
    </alternativeName>
    <alternativeName>
        <fullName evidence="2">F-type ATPase subunit b</fullName>
        <shortName evidence="2">F-ATPase subunit b</shortName>
    </alternativeName>
</protein>
<reference key="1">
    <citation type="journal article" date="2007" name="J. Bacteriol.">
        <title>Whole-genome analysis of the methyl tert-butyl ether-degrading beta-proteobacterium Methylibium petroleiphilum PM1.</title>
        <authorList>
            <person name="Kane S.R."/>
            <person name="Chakicherla A.Y."/>
            <person name="Chain P.S.G."/>
            <person name="Schmidt R."/>
            <person name="Shin M.W."/>
            <person name="Legler T.C."/>
            <person name="Scow K.M."/>
            <person name="Larimer F.W."/>
            <person name="Lucas S.M."/>
            <person name="Richardson P.M."/>
            <person name="Hristova K.R."/>
        </authorList>
    </citation>
    <scope>NUCLEOTIDE SEQUENCE [LARGE SCALE GENOMIC DNA]</scope>
    <source>
        <strain>ATCC BAA-1232 / LMG 22953 / PM1</strain>
    </source>
</reference>
<gene>
    <name evidence="2" type="primary">atpF</name>
    <name type="ordered locus">Mpe_A0193</name>
</gene>
<comment type="function">
    <text evidence="2">F(1)F(0) ATP synthase produces ATP from ADP in the presence of a proton or sodium gradient. F-type ATPases consist of two structural domains, F(1) containing the extramembraneous catalytic core and F(0) containing the membrane proton channel, linked together by a central stalk and a peripheral stalk. During catalysis, ATP synthesis in the catalytic domain of F(1) is coupled via a rotary mechanism of the central stalk subunits to proton translocation.</text>
</comment>
<comment type="function">
    <text evidence="2">Component of the F(0) channel, it forms part of the peripheral stalk, linking F(1) to F(0).</text>
</comment>
<comment type="subunit">
    <text evidence="1">F-type ATPases have 2 components, F(1) - the catalytic core - and F(0) - the membrane proton channel. F(1) has five subunits: alpha(3), beta(3), gamma(1), delta(1), epsilon(1). F(0) has four main subunits: a(1), b(2) and c(10-14). The alpha and beta chains form an alternating ring which encloses part of the gamma chain. F(1) is attached to F(0) by a central stalk formed by the gamma and epsilon chains, while a peripheral stalk is formed by the delta and b chains (By similarity).</text>
</comment>
<comment type="subcellular location">
    <subcellularLocation>
        <location evidence="2">Cell inner membrane</location>
        <topology evidence="2">Single-pass membrane protein</topology>
    </subcellularLocation>
</comment>
<comment type="similarity">
    <text evidence="2">Belongs to the ATPase B chain family.</text>
</comment>
<evidence type="ECO:0000250" key="1"/>
<evidence type="ECO:0000255" key="2">
    <source>
        <dbReference type="HAMAP-Rule" id="MF_01398"/>
    </source>
</evidence>
<accession>A2SC66</accession>